<comment type="function">
    <text evidence="1">Catalyzes the formation of S-adenosylmethionine (AdoMet) from methionine and ATP. The overall synthetic reaction is composed of two sequential steps, AdoMet formation and the subsequent tripolyphosphate hydrolysis which occurs prior to release of AdoMet from the enzyme.</text>
</comment>
<comment type="catalytic activity">
    <reaction evidence="1">
        <text>L-methionine + ATP + H2O = S-adenosyl-L-methionine + phosphate + diphosphate</text>
        <dbReference type="Rhea" id="RHEA:21080"/>
        <dbReference type="ChEBI" id="CHEBI:15377"/>
        <dbReference type="ChEBI" id="CHEBI:30616"/>
        <dbReference type="ChEBI" id="CHEBI:33019"/>
        <dbReference type="ChEBI" id="CHEBI:43474"/>
        <dbReference type="ChEBI" id="CHEBI:57844"/>
        <dbReference type="ChEBI" id="CHEBI:59789"/>
        <dbReference type="EC" id="2.5.1.6"/>
    </reaction>
</comment>
<comment type="cofactor">
    <cofactor evidence="1">
        <name>Mg(2+)</name>
        <dbReference type="ChEBI" id="CHEBI:18420"/>
    </cofactor>
    <text evidence="1">Binds 2 divalent ions per subunit.</text>
</comment>
<comment type="cofactor">
    <cofactor evidence="1">
        <name>K(+)</name>
        <dbReference type="ChEBI" id="CHEBI:29103"/>
    </cofactor>
    <text evidence="1">Binds 1 potassium ion per subunit.</text>
</comment>
<comment type="pathway">
    <text evidence="1">Amino-acid biosynthesis; S-adenosyl-L-methionine biosynthesis; S-adenosyl-L-methionine from L-methionine: step 1/1.</text>
</comment>
<comment type="subunit">
    <text evidence="1">Homotetramer; dimer of dimers.</text>
</comment>
<comment type="subcellular location">
    <subcellularLocation>
        <location evidence="1">Cytoplasm</location>
    </subcellularLocation>
</comment>
<comment type="similarity">
    <text evidence="1">Belongs to the AdoMet synthase family.</text>
</comment>
<keyword id="KW-0067">ATP-binding</keyword>
<keyword id="KW-0963">Cytoplasm</keyword>
<keyword id="KW-0460">Magnesium</keyword>
<keyword id="KW-0479">Metal-binding</keyword>
<keyword id="KW-0547">Nucleotide-binding</keyword>
<keyword id="KW-0554">One-carbon metabolism</keyword>
<keyword id="KW-0630">Potassium</keyword>
<keyword id="KW-1185">Reference proteome</keyword>
<keyword id="KW-0808">Transferase</keyword>
<reference key="1">
    <citation type="submission" date="2006-12" db="EMBL/GenBank/DDBJ databases">
        <title>Complete sequence of chromosome 1 of Nocardioides sp. JS614.</title>
        <authorList>
            <person name="Copeland A."/>
            <person name="Lucas S."/>
            <person name="Lapidus A."/>
            <person name="Barry K."/>
            <person name="Detter J.C."/>
            <person name="Glavina del Rio T."/>
            <person name="Hammon N."/>
            <person name="Israni S."/>
            <person name="Dalin E."/>
            <person name="Tice H."/>
            <person name="Pitluck S."/>
            <person name="Thompson L.S."/>
            <person name="Brettin T."/>
            <person name="Bruce D."/>
            <person name="Han C."/>
            <person name="Tapia R."/>
            <person name="Schmutz J."/>
            <person name="Larimer F."/>
            <person name="Land M."/>
            <person name="Hauser L."/>
            <person name="Kyrpides N."/>
            <person name="Kim E."/>
            <person name="Mattes T."/>
            <person name="Gossett J."/>
            <person name="Richardson P."/>
        </authorList>
    </citation>
    <scope>NUCLEOTIDE SEQUENCE [LARGE SCALE GENOMIC DNA]</scope>
    <source>
        <strain>ATCC BAA-499 / JS614</strain>
    </source>
</reference>
<feature type="chain" id="PRO_0000302952" description="S-adenosylmethionine synthase">
    <location>
        <begin position="1"/>
        <end position="396"/>
    </location>
</feature>
<feature type="region of interest" description="Flexible loop" evidence="1">
    <location>
        <begin position="99"/>
        <end position="109"/>
    </location>
</feature>
<feature type="binding site" description="in other chain" evidence="1">
    <location>
        <position position="15"/>
    </location>
    <ligand>
        <name>ATP</name>
        <dbReference type="ChEBI" id="CHEBI:30616"/>
        <note>ligand shared between two neighboring subunits</note>
    </ligand>
</feature>
<feature type="binding site" evidence="1">
    <location>
        <position position="17"/>
    </location>
    <ligand>
        <name>Mg(2+)</name>
        <dbReference type="ChEBI" id="CHEBI:18420"/>
    </ligand>
</feature>
<feature type="binding site" evidence="1">
    <location>
        <position position="43"/>
    </location>
    <ligand>
        <name>K(+)</name>
        <dbReference type="ChEBI" id="CHEBI:29103"/>
    </ligand>
</feature>
<feature type="binding site" description="in other chain" evidence="1">
    <location>
        <position position="56"/>
    </location>
    <ligand>
        <name>L-methionine</name>
        <dbReference type="ChEBI" id="CHEBI:57844"/>
        <note>ligand shared between two neighboring subunits</note>
    </ligand>
</feature>
<feature type="binding site" description="in other chain" evidence="1">
    <location>
        <position position="99"/>
    </location>
    <ligand>
        <name>L-methionine</name>
        <dbReference type="ChEBI" id="CHEBI:57844"/>
        <note>ligand shared between two neighboring subunits</note>
    </ligand>
</feature>
<feature type="binding site" description="in other chain" evidence="1">
    <location>
        <begin position="173"/>
        <end position="175"/>
    </location>
    <ligand>
        <name>ATP</name>
        <dbReference type="ChEBI" id="CHEBI:30616"/>
        <note>ligand shared between two neighboring subunits</note>
    </ligand>
</feature>
<feature type="binding site" description="in other chain" evidence="1">
    <location>
        <begin position="241"/>
        <end position="242"/>
    </location>
    <ligand>
        <name>ATP</name>
        <dbReference type="ChEBI" id="CHEBI:30616"/>
        <note>ligand shared between two neighboring subunits</note>
    </ligand>
</feature>
<feature type="binding site" evidence="1">
    <location>
        <position position="250"/>
    </location>
    <ligand>
        <name>ATP</name>
        <dbReference type="ChEBI" id="CHEBI:30616"/>
        <note>ligand shared between two neighboring subunits</note>
    </ligand>
</feature>
<feature type="binding site" evidence="1">
    <location>
        <position position="250"/>
    </location>
    <ligand>
        <name>L-methionine</name>
        <dbReference type="ChEBI" id="CHEBI:57844"/>
        <note>ligand shared between two neighboring subunits</note>
    </ligand>
</feature>
<feature type="binding site" description="in other chain" evidence="1">
    <location>
        <begin position="256"/>
        <end position="257"/>
    </location>
    <ligand>
        <name>ATP</name>
        <dbReference type="ChEBI" id="CHEBI:30616"/>
        <note>ligand shared between two neighboring subunits</note>
    </ligand>
</feature>
<feature type="binding site" evidence="1">
    <location>
        <position position="273"/>
    </location>
    <ligand>
        <name>ATP</name>
        <dbReference type="ChEBI" id="CHEBI:30616"/>
        <note>ligand shared between two neighboring subunits</note>
    </ligand>
</feature>
<feature type="binding site" evidence="1">
    <location>
        <position position="277"/>
    </location>
    <ligand>
        <name>ATP</name>
        <dbReference type="ChEBI" id="CHEBI:30616"/>
        <note>ligand shared between two neighboring subunits</note>
    </ligand>
</feature>
<feature type="binding site" description="in other chain" evidence="1">
    <location>
        <position position="281"/>
    </location>
    <ligand>
        <name>L-methionine</name>
        <dbReference type="ChEBI" id="CHEBI:57844"/>
        <note>ligand shared between two neighboring subunits</note>
    </ligand>
</feature>
<protein>
    <recommendedName>
        <fullName evidence="1">S-adenosylmethionine synthase</fullName>
        <shortName evidence="1">AdoMet synthase</shortName>
        <ecNumber evidence="1">2.5.1.6</ecNumber>
    </recommendedName>
    <alternativeName>
        <fullName evidence="1">MAT</fullName>
    </alternativeName>
    <alternativeName>
        <fullName evidence="1">Methionine adenosyltransferase</fullName>
    </alternativeName>
</protein>
<sequence>MTGRLFTSESVTEGHPDKIADQISDSVLDAMLELDPTSRVAVETLLTTGVVVVAGEVTTTGYVDVKDVVRRRIIEIGYDSSVKGFDGHSCGVMVAIGGQSGDIAQGVDTGHESRTGSVDAMDKQGAGDQGLMFGYACDDTDVLMPLPIVIAQRLAEQLTAVRKDGTLPYLRPDGKTQVTIEYDAENRPVRVDTVVLSSQHDEDTELDTLEADVKKHVIDPVLATFPIPSEGYRLLVNPTGRFVVGGPMGDAGLTGRKIIVDTYGGMARHGGGAFSGKDPSKVDRSAAYAMRWVAKNVVAAGLATRCEAQVAYAIGKAQPVGVFVETFGTGVVDDERIQEAVLEVFDLRPAAIIRDLDLLRPIYAKTAAYGHFGRELPEFTWERTDRADALRAAAGL</sequence>
<name>METK_NOCSJ</name>
<evidence type="ECO:0000255" key="1">
    <source>
        <dbReference type="HAMAP-Rule" id="MF_00086"/>
    </source>
</evidence>
<accession>A1SJF9</accession>
<gene>
    <name evidence="1" type="primary">metK</name>
    <name type="ordered locus">Noca_2439</name>
</gene>
<dbReference type="EC" id="2.5.1.6" evidence="1"/>
<dbReference type="EMBL" id="CP000509">
    <property type="protein sequence ID" value="ABL81944.1"/>
    <property type="molecule type" value="Genomic_DNA"/>
</dbReference>
<dbReference type="RefSeq" id="WP_011755885.1">
    <property type="nucleotide sequence ID" value="NC_008699.1"/>
</dbReference>
<dbReference type="SMR" id="A1SJF9"/>
<dbReference type="STRING" id="196162.Noca_2439"/>
<dbReference type="KEGG" id="nca:Noca_2439"/>
<dbReference type="eggNOG" id="COG0192">
    <property type="taxonomic scope" value="Bacteria"/>
</dbReference>
<dbReference type="HOGENOM" id="CLU_041802_1_1_11"/>
<dbReference type="OrthoDB" id="9801686at2"/>
<dbReference type="UniPathway" id="UPA00315">
    <property type="reaction ID" value="UER00080"/>
</dbReference>
<dbReference type="Proteomes" id="UP000000640">
    <property type="component" value="Chromosome"/>
</dbReference>
<dbReference type="GO" id="GO:0005737">
    <property type="term" value="C:cytoplasm"/>
    <property type="evidence" value="ECO:0007669"/>
    <property type="project" value="UniProtKB-SubCell"/>
</dbReference>
<dbReference type="GO" id="GO:0005524">
    <property type="term" value="F:ATP binding"/>
    <property type="evidence" value="ECO:0007669"/>
    <property type="project" value="UniProtKB-UniRule"/>
</dbReference>
<dbReference type="GO" id="GO:0000287">
    <property type="term" value="F:magnesium ion binding"/>
    <property type="evidence" value="ECO:0007669"/>
    <property type="project" value="UniProtKB-UniRule"/>
</dbReference>
<dbReference type="GO" id="GO:0004478">
    <property type="term" value="F:methionine adenosyltransferase activity"/>
    <property type="evidence" value="ECO:0007669"/>
    <property type="project" value="UniProtKB-UniRule"/>
</dbReference>
<dbReference type="GO" id="GO:0006730">
    <property type="term" value="P:one-carbon metabolic process"/>
    <property type="evidence" value="ECO:0007669"/>
    <property type="project" value="UniProtKB-KW"/>
</dbReference>
<dbReference type="GO" id="GO:0006556">
    <property type="term" value="P:S-adenosylmethionine biosynthetic process"/>
    <property type="evidence" value="ECO:0007669"/>
    <property type="project" value="UniProtKB-UniRule"/>
</dbReference>
<dbReference type="CDD" id="cd18079">
    <property type="entry name" value="S-AdoMet_synt"/>
    <property type="match status" value="1"/>
</dbReference>
<dbReference type="FunFam" id="3.30.300.10:FF:000003">
    <property type="entry name" value="S-adenosylmethionine synthase"/>
    <property type="match status" value="1"/>
</dbReference>
<dbReference type="Gene3D" id="3.30.300.10">
    <property type="match status" value="3"/>
</dbReference>
<dbReference type="HAMAP" id="MF_00086">
    <property type="entry name" value="S_AdoMet_synth1"/>
    <property type="match status" value="1"/>
</dbReference>
<dbReference type="InterPro" id="IPR022631">
    <property type="entry name" value="ADOMET_SYNTHASE_CS"/>
</dbReference>
<dbReference type="InterPro" id="IPR022630">
    <property type="entry name" value="S-AdoMet_synt_C"/>
</dbReference>
<dbReference type="InterPro" id="IPR022629">
    <property type="entry name" value="S-AdoMet_synt_central"/>
</dbReference>
<dbReference type="InterPro" id="IPR022628">
    <property type="entry name" value="S-AdoMet_synt_N"/>
</dbReference>
<dbReference type="InterPro" id="IPR002133">
    <property type="entry name" value="S-AdoMet_synthetase"/>
</dbReference>
<dbReference type="InterPro" id="IPR022636">
    <property type="entry name" value="S-AdoMet_synthetase_sfam"/>
</dbReference>
<dbReference type="NCBIfam" id="TIGR01034">
    <property type="entry name" value="metK"/>
    <property type="match status" value="1"/>
</dbReference>
<dbReference type="PANTHER" id="PTHR11964">
    <property type="entry name" value="S-ADENOSYLMETHIONINE SYNTHETASE"/>
    <property type="match status" value="1"/>
</dbReference>
<dbReference type="Pfam" id="PF02773">
    <property type="entry name" value="S-AdoMet_synt_C"/>
    <property type="match status" value="1"/>
</dbReference>
<dbReference type="Pfam" id="PF02772">
    <property type="entry name" value="S-AdoMet_synt_M"/>
    <property type="match status" value="1"/>
</dbReference>
<dbReference type="Pfam" id="PF00438">
    <property type="entry name" value="S-AdoMet_synt_N"/>
    <property type="match status" value="1"/>
</dbReference>
<dbReference type="PIRSF" id="PIRSF000497">
    <property type="entry name" value="MAT"/>
    <property type="match status" value="1"/>
</dbReference>
<dbReference type="SUPFAM" id="SSF55973">
    <property type="entry name" value="S-adenosylmethionine synthetase"/>
    <property type="match status" value="3"/>
</dbReference>
<dbReference type="PROSITE" id="PS00376">
    <property type="entry name" value="ADOMET_SYNTHASE_1"/>
    <property type="match status" value="1"/>
</dbReference>
<dbReference type="PROSITE" id="PS00377">
    <property type="entry name" value="ADOMET_SYNTHASE_2"/>
    <property type="match status" value="1"/>
</dbReference>
<organism>
    <name type="scientific">Nocardioides sp. (strain ATCC BAA-499 / JS614)</name>
    <dbReference type="NCBI Taxonomy" id="196162"/>
    <lineage>
        <taxon>Bacteria</taxon>
        <taxon>Bacillati</taxon>
        <taxon>Actinomycetota</taxon>
        <taxon>Actinomycetes</taxon>
        <taxon>Propionibacteriales</taxon>
        <taxon>Nocardioidaceae</taxon>
        <taxon>Nocardioides</taxon>
    </lineage>
</organism>
<proteinExistence type="inferred from homology"/>